<comment type="function">
    <text evidence="1">May act as a specific coactivator for the mammalian TEFs.</text>
</comment>
<comment type="interaction">
    <interactant intactId="EBI-11957216">
        <id>A8MV65-2</id>
    </interactant>
    <interactant intactId="EBI-2802782">
        <id>Q6NVV7</id>
        <label>CDPF1</label>
    </interactant>
    <organismsDiffer>false</organismsDiffer>
    <experiments>3</experiments>
</comment>
<comment type="interaction">
    <interactant intactId="EBI-11957216">
        <id>A8MV65-2</id>
    </interactant>
    <interactant intactId="EBI-12261896">
        <id>Q5T4B2</id>
        <label>CERCAM</label>
    </interactant>
    <organismsDiffer>false</organismsDiffer>
    <experiments>3</experiments>
</comment>
<comment type="interaction">
    <interactant intactId="EBI-11957216">
        <id>A8MV65-2</id>
    </interactant>
    <interactant intactId="EBI-12819063">
        <id>Q9BYD5</id>
        <label>CNFN</label>
    </interactant>
    <organismsDiffer>false</organismsDiffer>
    <experiments>3</experiments>
</comment>
<comment type="interaction">
    <interactant intactId="EBI-11957216">
        <id>A8MV65-2</id>
    </interactant>
    <interactant intactId="EBI-10295404">
        <id>Q99895</id>
        <label>CTRC</label>
    </interactant>
    <organismsDiffer>false</organismsDiffer>
    <experiments>3</experiments>
</comment>
<comment type="interaction">
    <interactant intactId="EBI-11957216">
        <id>A8MV65-2</id>
    </interactant>
    <interactant intactId="EBI-3867333">
        <id>A8MQ03</id>
        <label>CYSRT1</label>
    </interactant>
    <organismsDiffer>false</organismsDiffer>
    <experiments>3</experiments>
</comment>
<comment type="interaction">
    <interactant intactId="EBI-11957216">
        <id>A8MV65-2</id>
    </interactant>
    <interactant intactId="EBI-740376">
        <id>Q86UW9</id>
        <label>DTX2</label>
    </interactant>
    <organismsDiffer>false</organismsDiffer>
    <experiments>3</experiments>
</comment>
<comment type="interaction">
    <interactant intactId="EBI-11957216">
        <id>A8MV65-2</id>
    </interactant>
    <interactant intactId="EBI-12260294">
        <id>Q9NQ30</id>
        <label>ESM1</label>
    </interactant>
    <organismsDiffer>false</organismsDiffer>
    <experiments>3</experiments>
</comment>
<comment type="interaction">
    <interactant intactId="EBI-11957216">
        <id>A8MV65-2</id>
    </interactant>
    <interactant intactId="EBI-12193763">
        <id>A1KXE4-2</id>
        <label>FAM168B</label>
    </interactant>
    <organismsDiffer>false</organismsDiffer>
    <experiments>3</experiments>
</comment>
<comment type="interaction">
    <interactant intactId="EBI-11957216">
        <id>A8MV65-2</id>
    </interactant>
    <interactant intactId="EBI-725515">
        <id>O43559</id>
        <label>FRS3</label>
    </interactant>
    <organismsDiffer>false</organismsDiffer>
    <experiments>3</experiments>
</comment>
<comment type="interaction">
    <interactant intactId="EBI-11957216">
        <id>A8MV65-2</id>
    </interactant>
    <interactant intactId="EBI-740220">
        <id>O14964</id>
        <label>HGS</label>
    </interactant>
    <organismsDiffer>false</organismsDiffer>
    <experiments>3</experiments>
</comment>
<comment type="interaction">
    <interactant intactId="EBI-11957216">
        <id>A8MV65-2</id>
    </interactant>
    <interactant intactId="EBI-6509505">
        <id>Q0VD86</id>
        <label>INCA1</label>
    </interactant>
    <organismsDiffer>false</organismsDiffer>
    <experiments>3</experiments>
</comment>
<comment type="interaction">
    <interactant intactId="EBI-11957216">
        <id>A8MV65-2</id>
    </interactant>
    <interactant intactId="EBI-10981970">
        <id>Q5T749</id>
        <label>KPRP</label>
    </interactant>
    <organismsDiffer>false</organismsDiffer>
    <experiments>3</experiments>
</comment>
<comment type="interaction">
    <interactant intactId="EBI-11957216">
        <id>A8MV65-2</id>
    </interactant>
    <interactant intactId="EBI-11959885">
        <id>Q07627</id>
        <label>KRTAP1-1</label>
    </interactant>
    <organismsDiffer>false</organismsDiffer>
    <experiments>3</experiments>
</comment>
<comment type="interaction">
    <interactant intactId="EBI-11957216">
        <id>A8MV65-2</id>
    </interactant>
    <interactant intactId="EBI-10172290">
        <id>P60409</id>
        <label>KRTAP10-7</label>
    </interactant>
    <organismsDiffer>false</organismsDiffer>
    <experiments>3</experiments>
</comment>
<comment type="interaction">
    <interactant intactId="EBI-11957216">
        <id>A8MV65-2</id>
    </interactant>
    <interactant intactId="EBI-10171774">
        <id>P60410</id>
        <label>KRTAP10-8</label>
    </interactant>
    <organismsDiffer>false</organismsDiffer>
    <experiments>3</experiments>
</comment>
<comment type="interaction">
    <interactant intactId="EBI-11957216">
        <id>A8MV65-2</id>
    </interactant>
    <interactant intactId="EBI-10172052">
        <id>P60411</id>
        <label>KRTAP10-9</label>
    </interactant>
    <organismsDiffer>false</organismsDiffer>
    <experiments>3</experiments>
</comment>
<comment type="interaction">
    <interactant intactId="EBI-11957216">
        <id>A8MV65-2</id>
    </interactant>
    <interactant intactId="EBI-1052037">
        <id>Q8IUC1</id>
        <label>KRTAP11-1</label>
    </interactant>
    <organismsDiffer>false</organismsDiffer>
    <experiments>3</experiments>
</comment>
<comment type="interaction">
    <interactant intactId="EBI-11957216">
        <id>A8MV65-2</id>
    </interactant>
    <interactant intactId="EBI-10210845">
        <id>P59990</id>
        <label>KRTAP12-1</label>
    </interactant>
    <organismsDiffer>false</organismsDiffer>
    <experiments>3</experiments>
</comment>
<comment type="interaction">
    <interactant intactId="EBI-11957216">
        <id>A8MV65-2</id>
    </interactant>
    <interactant intactId="EBI-10176379">
        <id>P59991</id>
        <label>KRTAP12-2</label>
    </interactant>
    <organismsDiffer>false</organismsDiffer>
    <experiments>3</experiments>
</comment>
<comment type="interaction">
    <interactant intactId="EBI-11957216">
        <id>A8MV65-2</id>
    </interactant>
    <interactant intactId="EBI-11953334">
        <id>P60328</id>
        <label>KRTAP12-3</label>
    </interactant>
    <organismsDiffer>false</organismsDiffer>
    <experiments>3</experiments>
</comment>
<comment type="interaction">
    <interactant intactId="EBI-11957216">
        <id>A8MV65-2</id>
    </interactant>
    <interactant intactId="EBI-11953846">
        <id>Q52LG2</id>
        <label>KRTAP13-2</label>
    </interactant>
    <organismsDiffer>false</organismsDiffer>
    <experiments>3</experiments>
</comment>
<comment type="interaction">
    <interactant intactId="EBI-11957216">
        <id>A8MV65-2</id>
    </interactant>
    <interactant intactId="EBI-11992140">
        <id>Q3LI76</id>
        <label>KRTAP15-1</label>
    </interactant>
    <organismsDiffer>false</organismsDiffer>
    <experiments>3</experiments>
</comment>
<comment type="interaction">
    <interactant intactId="EBI-11957216">
        <id>A8MV65-2</id>
    </interactant>
    <interactant intactId="EBI-12811111">
        <id>Q8IUB9</id>
        <label>KRTAP19-1</label>
    </interactant>
    <organismsDiffer>false</organismsDiffer>
    <experiments>3</experiments>
</comment>
<comment type="interaction">
    <interactant intactId="EBI-11957216">
        <id>A8MV65-2</id>
    </interactant>
    <interactant intactId="EBI-12196745">
        <id>Q3LHN2</id>
        <label>KRTAP19-2</label>
    </interactant>
    <organismsDiffer>false</organismsDiffer>
    <experiments>5</experiments>
</comment>
<comment type="interaction">
    <interactant intactId="EBI-11957216">
        <id>A8MV65-2</id>
    </interactant>
    <interactant intactId="EBI-12805508">
        <id>Q3LI70</id>
        <label>KRTAP19-6</label>
    </interactant>
    <organismsDiffer>false</organismsDiffer>
    <experiments>3</experiments>
</comment>
<comment type="interaction">
    <interactant intactId="EBI-11957216">
        <id>A8MV65-2</id>
    </interactant>
    <interactant intactId="EBI-10241353">
        <id>Q3SYF9</id>
        <label>KRTAP19-7</label>
    </interactant>
    <organismsDiffer>false</organismsDiffer>
    <experiments>3</experiments>
</comment>
<comment type="interaction">
    <interactant intactId="EBI-11957216">
        <id>A8MV65-2</id>
    </interactant>
    <interactant intactId="EBI-9996449">
        <id>Q9BYR8</id>
        <label>KRTAP3-1</label>
    </interactant>
    <organismsDiffer>false</organismsDiffer>
    <experiments>3</experiments>
</comment>
<comment type="interaction">
    <interactant intactId="EBI-11957216">
        <id>A8MV65-2</id>
    </interactant>
    <interactant intactId="EBI-3957694">
        <id>Q9BYR6</id>
        <label>KRTAP3-3</label>
    </interactant>
    <organismsDiffer>false</organismsDiffer>
    <experiments>3</experiments>
</comment>
<comment type="interaction">
    <interactant intactId="EBI-11957216">
        <id>A8MV65-2</id>
    </interactant>
    <interactant intactId="EBI-10302392">
        <id>Q9BYQ6</id>
        <label>KRTAP4-11</label>
    </interactant>
    <organismsDiffer>false</organismsDiffer>
    <experiments>3</experiments>
</comment>
<comment type="interaction">
    <interactant intactId="EBI-11957216">
        <id>A8MV65-2</id>
    </interactant>
    <interactant intactId="EBI-10172511">
        <id>Q9BYR5</id>
        <label>KRTAP4-2</label>
    </interactant>
    <organismsDiffer>false</organismsDiffer>
    <experiments>3</experiments>
</comment>
<comment type="interaction">
    <interactant intactId="EBI-11957216">
        <id>A8MV65-2</id>
    </interactant>
    <interactant intactId="EBI-11993296">
        <id>Q6L8G4</id>
        <label>KRTAP5-11</label>
    </interactant>
    <organismsDiffer>false</organismsDiffer>
    <experiments>3</experiments>
</comment>
<comment type="interaction">
    <interactant intactId="EBI-11957216">
        <id>A8MV65-2</id>
    </interactant>
    <interactant intactId="EBI-10250562">
        <id>Q6L8G9</id>
        <label>KRTAP5-6</label>
    </interactant>
    <organismsDiffer>false</organismsDiffer>
    <experiments>3</experiments>
</comment>
<comment type="interaction">
    <interactant intactId="EBI-11957216">
        <id>A8MV65-2</id>
    </interactant>
    <interactant intactId="EBI-12111050">
        <id>Q3LI64</id>
        <label>KRTAP6-1</label>
    </interactant>
    <organismsDiffer>false</organismsDiffer>
    <experiments>3</experiments>
</comment>
<comment type="interaction">
    <interactant intactId="EBI-11957216">
        <id>A8MV65-2</id>
    </interactant>
    <interactant intactId="EBI-11962084">
        <id>Q3LI66</id>
        <label>KRTAP6-2</label>
    </interactant>
    <organismsDiffer>false</organismsDiffer>
    <experiments>3</experiments>
</comment>
<comment type="interaction">
    <interactant intactId="EBI-11957216">
        <id>A8MV65-2</id>
    </interactant>
    <interactant intactId="EBI-1044640">
        <id>Q9BYQ4</id>
        <label>KRTAP9-2</label>
    </interactant>
    <organismsDiffer>false</organismsDiffer>
    <experiments>3</experiments>
</comment>
<comment type="interaction">
    <interactant intactId="EBI-11957216">
        <id>A8MV65-2</id>
    </interactant>
    <interactant intactId="EBI-1043191">
        <id>Q9BYQ3</id>
        <label>KRTAP9-3</label>
    </interactant>
    <organismsDiffer>false</organismsDiffer>
    <experiments>3</experiments>
</comment>
<comment type="interaction">
    <interactant intactId="EBI-11957216">
        <id>A8MV65-2</id>
    </interactant>
    <interactant intactId="EBI-11958364">
        <id>Q9BYQ0</id>
        <label>KRTAP9-8</label>
    </interactant>
    <organismsDiffer>false</organismsDiffer>
    <experiments>3</experiments>
</comment>
<comment type="interaction">
    <interactant intactId="EBI-11957216">
        <id>A8MV65-2</id>
    </interactant>
    <interactant intactId="EBI-9088686">
        <id>Q14847-2</id>
        <label>LASP1</label>
    </interactant>
    <organismsDiffer>false</organismsDiffer>
    <experiments>3</experiments>
</comment>
<comment type="interaction">
    <interactant intactId="EBI-11957216">
        <id>A8MV65-2</id>
    </interactant>
    <interactant intactId="EBI-739546">
        <id>Q96PV6</id>
        <label>LENG8</label>
    </interactant>
    <organismsDiffer>false</organismsDiffer>
    <experiments>3</experiments>
</comment>
<comment type="interaction">
    <interactant intactId="EBI-11957216">
        <id>A8MV65-2</id>
    </interactant>
    <interactant intactId="EBI-724076">
        <id>Q99750</id>
        <label>MDFI</label>
    </interactant>
    <organismsDiffer>false</organismsDiffer>
    <experiments>3</experiments>
</comment>
<comment type="interaction">
    <interactant intactId="EBI-11957216">
        <id>A8MV65-2</id>
    </interactant>
    <interactant intactId="EBI-7950783">
        <id>Q96JP2</id>
        <label>MYO15B</label>
    </interactant>
    <organismsDiffer>false</organismsDiffer>
    <experiments>3</experiments>
</comment>
<comment type="interaction">
    <interactant intactId="EBI-11957216">
        <id>A8MV65-2</id>
    </interactant>
    <interactant intactId="EBI-12813389">
        <id>Q8TDS5</id>
        <label>OXER1</label>
    </interactant>
    <organismsDiffer>false</organismsDiffer>
    <experiments>3</experiments>
</comment>
<comment type="interaction">
    <interactant intactId="EBI-11957216">
        <id>A8MV65-2</id>
    </interactant>
    <interactant intactId="EBI-11956269">
        <id>Q92824-2</id>
        <label>PCSK5</label>
    </interactant>
    <organismsDiffer>false</organismsDiffer>
    <experiments>3</experiments>
</comment>
<comment type="interaction">
    <interactant intactId="EBI-11957216">
        <id>A8MV65-2</id>
    </interactant>
    <interactant intactId="EBI-748265">
        <id>P78337</id>
        <label>PITX1</label>
    </interactant>
    <organismsDiffer>false</organismsDiffer>
    <experiments>3</experiments>
</comment>
<comment type="interaction">
    <interactant intactId="EBI-11957216">
        <id>A8MV65-2</id>
    </interactant>
    <interactant intactId="EBI-12138495">
        <id>Q99697-2</id>
        <label>PITX2</label>
    </interactant>
    <organismsDiffer>false</organismsDiffer>
    <experiments>3</experiments>
</comment>
<comment type="interaction">
    <interactant intactId="EBI-11957216">
        <id>A8MV65-2</id>
    </interactant>
    <interactant intactId="EBI-726466">
        <id>O15496</id>
        <label>PLA2G10</label>
    </interactant>
    <organismsDiffer>false</organismsDiffer>
    <experiments>3</experiments>
</comment>
<comment type="interaction">
    <interactant intactId="EBI-11957216">
        <id>A8MV65-2</id>
    </interactant>
    <interactant intactId="EBI-1389308">
        <id>Q7Z3K3</id>
        <label>POGZ</label>
    </interactant>
    <organismsDiffer>false</organismsDiffer>
    <experiments>3</experiments>
</comment>
<comment type="interaction">
    <interactant intactId="EBI-11957216">
        <id>A8MV65-2</id>
    </interactant>
    <interactant intactId="EBI-943588">
        <id>Q16633</id>
        <label>POU2AF1</label>
    </interactant>
    <organismsDiffer>false</organismsDiffer>
    <experiments>3</experiments>
</comment>
<comment type="interaction">
    <interactant intactId="EBI-11957216">
        <id>A8MV65-2</id>
    </interactant>
    <interactant intactId="EBI-740343">
        <id>Q93062-3</id>
        <label>RBPMS</label>
    </interactant>
    <organismsDiffer>false</organismsDiffer>
    <experiments>3</experiments>
</comment>
<comment type="interaction">
    <interactant intactId="EBI-11957216">
        <id>A8MV65-2</id>
    </interactant>
    <interactant intactId="EBI-6257312">
        <id>Q9BVN2</id>
        <label>RUSC1</label>
    </interactant>
    <organismsDiffer>false</organismsDiffer>
    <experiments>3</experiments>
</comment>
<comment type="interaction">
    <interactant intactId="EBI-11957216">
        <id>A8MV65-2</id>
    </interactant>
    <interactant intactId="EBI-355653">
        <id>Q92922</id>
        <label>SMARCC1</label>
    </interactant>
    <organismsDiffer>false</organismsDiffer>
    <experiments>3</experiments>
</comment>
<comment type="interaction">
    <interactant intactId="EBI-11957216">
        <id>A8MV65-2</id>
    </interactant>
    <interactant intactId="EBI-12162539">
        <id>Q9H4F8-2</id>
        <label>SMOC1</label>
    </interactant>
    <organismsDiffer>false</organismsDiffer>
    <experiments>3</experiments>
</comment>
<comment type="interaction">
    <interactant intactId="EBI-11957216">
        <id>A8MV65-2</id>
    </interactant>
    <interactant intactId="EBI-743976">
        <id>Q96LM6</id>
        <label>SPMIP9</label>
    </interactant>
    <organismsDiffer>false</organismsDiffer>
    <experiments>3</experiments>
</comment>
<comment type="interaction">
    <interactant intactId="EBI-11957216">
        <id>A8MV65-2</id>
    </interactant>
    <interactant intactId="EBI-10191361">
        <id>Q96SF7</id>
        <label>TBX15</label>
    </interactant>
    <organismsDiffer>false</organismsDiffer>
    <experiments>3</experiments>
</comment>
<comment type="interaction">
    <interactant intactId="EBI-11957216">
        <id>A8MV65-2</id>
    </interactant>
    <interactant intactId="EBI-12151837">
        <id>P28347-2</id>
        <label>TEAD1</label>
    </interactant>
    <organismsDiffer>false</organismsDiffer>
    <experiments>3</experiments>
</comment>
<comment type="interaction">
    <interactant intactId="EBI-11957216">
        <id>A8MV65-2</id>
    </interactant>
    <interactant intactId="EBI-9370956">
        <id>Q15562-2</id>
        <label>TEAD2</label>
    </interactant>
    <organismsDiffer>false</organismsDiffer>
    <experiments>3</experiments>
</comment>
<comment type="interaction">
    <interactant intactId="EBI-11957216">
        <id>A8MV65-2</id>
    </interactant>
    <interactant intactId="EBI-746720">
        <id>Q99594</id>
        <label>TEAD3</label>
    </interactant>
    <organismsDiffer>false</organismsDiffer>
    <experiments>3</experiments>
</comment>
<comment type="interaction">
    <interactant intactId="EBI-11957216">
        <id>A8MV65-2</id>
    </interactant>
    <interactant intactId="EBI-747736">
        <id>Q15561</id>
        <label>TEAD4</label>
    </interactant>
    <organismsDiffer>false</organismsDiffer>
    <experiments>3</experiments>
</comment>
<comment type="interaction">
    <interactant intactId="EBI-11957216">
        <id>A8MV65-2</id>
    </interactant>
    <interactant intactId="EBI-5235829">
        <id>Q8IWZ5</id>
        <label>TRIM42</label>
    </interactant>
    <organismsDiffer>false</organismsDiffer>
    <experiments>3</experiments>
</comment>
<comment type="interaction">
    <interactant intactId="EBI-11957216">
        <id>A8MV65-2</id>
    </interactant>
    <interactant intactId="EBI-12806590">
        <id>Q86WV8</id>
        <label>TSC1</label>
    </interactant>
    <organismsDiffer>false</organismsDiffer>
    <experiments>3</experiments>
</comment>
<comment type="interaction">
    <interactant intactId="EBI-11957216">
        <id>A8MV65-2</id>
    </interactant>
    <interactant intactId="EBI-8652667">
        <id>O14817</id>
        <label>TSPAN4</label>
    </interactant>
    <organismsDiffer>false</organismsDiffer>
    <experiments>3</experiments>
</comment>
<comment type="interaction">
    <interactant intactId="EBI-11957216">
        <id>A8MV65-2</id>
    </interactant>
    <interactant intactId="EBI-12068150">
        <id>Q6NVU6</id>
        <label>UFSP1</label>
    </interactant>
    <organismsDiffer>false</organismsDiffer>
    <experiments>3</experiments>
</comment>
<comment type="subcellular location">
    <subcellularLocation>
        <location evidence="1">Nucleus</location>
    </subcellularLocation>
</comment>
<comment type="alternative products">
    <event type="alternative splicing"/>
    <isoform>
        <id>A8MV65-1</id>
        <name>1</name>
        <sequence type="displayed"/>
    </isoform>
    <isoform>
        <id>A8MV65-2</id>
        <name evidence="5">2</name>
        <sequence type="described" ref="VSP_052713"/>
    </isoform>
</comment>
<comment type="tissue specificity">
    <text evidence="4">Enriched in placenta.</text>
</comment>
<comment type="similarity">
    <text evidence="2">Belongs to the vestigial family.</text>
</comment>
<dbReference type="EMBL" id="AC108709">
    <property type="status" value="NOT_ANNOTATED_CDS"/>
    <property type="molecule type" value="Genomic_DNA"/>
</dbReference>
<dbReference type="EMBL" id="CH471110">
    <property type="protein sequence ID" value="EAW68870.1"/>
    <property type="molecule type" value="Genomic_DNA"/>
</dbReference>
<dbReference type="EMBL" id="CH471110">
    <property type="protein sequence ID" value="EAW68871.1"/>
    <property type="molecule type" value="Genomic_DNA"/>
</dbReference>
<dbReference type="EMBL" id="BC094780">
    <property type="protein sequence ID" value="AAH94780.1"/>
    <property type="molecule type" value="mRNA"/>
</dbReference>
<dbReference type="CCDS" id="CCDS43110.1">
    <molecule id="A8MV65-1"/>
</dbReference>
<dbReference type="CCDS" id="CCDS82807.1">
    <molecule id="A8MV65-2"/>
</dbReference>
<dbReference type="RefSeq" id="NP_001307422.1">
    <molecule id="A8MV65-2"/>
    <property type="nucleotide sequence ID" value="NM_001320493.2"/>
</dbReference>
<dbReference type="RefSeq" id="NP_057290.2">
    <molecule id="A8MV65-1"/>
    <property type="nucleotide sequence ID" value="NM_016206.4"/>
</dbReference>
<dbReference type="BioGRID" id="132991">
    <property type="interactions" value="71"/>
</dbReference>
<dbReference type="FunCoup" id="A8MV65">
    <property type="interactions" value="969"/>
</dbReference>
<dbReference type="IntAct" id="A8MV65">
    <property type="interactions" value="64"/>
</dbReference>
<dbReference type="STRING" id="9606.ENSP00000381436"/>
<dbReference type="GlyGen" id="A8MV65">
    <property type="glycosylation" value="1 site, 1 O-linked glycan (1 site)"/>
</dbReference>
<dbReference type="iPTMnet" id="A8MV65"/>
<dbReference type="PhosphoSitePlus" id="A8MV65"/>
<dbReference type="BioMuta" id="VGLL3"/>
<dbReference type="jPOST" id="A8MV65"/>
<dbReference type="MassIVE" id="A8MV65"/>
<dbReference type="PaxDb" id="9606-ENSP00000381436"/>
<dbReference type="PeptideAtlas" id="A8MV65"/>
<dbReference type="ProteomicsDB" id="2156">
    <molecule id="A8MV65-1"/>
</dbReference>
<dbReference type="ProteomicsDB" id="2157">
    <molecule id="A8MV65-2"/>
</dbReference>
<dbReference type="Antibodypedia" id="32031">
    <property type="antibodies" value="104 antibodies from 16 providers"/>
</dbReference>
<dbReference type="DNASU" id="389136"/>
<dbReference type="Ensembl" id="ENST00000383698.3">
    <molecule id="A8MV65-2"/>
    <property type="protein sequence ID" value="ENSP00000373199.3"/>
    <property type="gene ID" value="ENSG00000206538.9"/>
</dbReference>
<dbReference type="Ensembl" id="ENST00000398399.7">
    <molecule id="A8MV65-1"/>
    <property type="protein sequence ID" value="ENSP00000381436.2"/>
    <property type="gene ID" value="ENSG00000206538.9"/>
</dbReference>
<dbReference type="GeneID" id="389136"/>
<dbReference type="KEGG" id="hsa:389136"/>
<dbReference type="MANE-Select" id="ENST00000398399.7">
    <property type="protein sequence ID" value="ENSP00000381436.2"/>
    <property type="RefSeq nucleotide sequence ID" value="NM_016206.4"/>
    <property type="RefSeq protein sequence ID" value="NP_057290.2"/>
</dbReference>
<dbReference type="UCSC" id="uc003dqn.4">
    <molecule id="A8MV65-1"/>
    <property type="organism name" value="human"/>
</dbReference>
<dbReference type="AGR" id="HGNC:24327"/>
<dbReference type="CTD" id="389136"/>
<dbReference type="DisGeNET" id="389136"/>
<dbReference type="GeneCards" id="VGLL3"/>
<dbReference type="HGNC" id="HGNC:24327">
    <property type="gene designation" value="VGLL3"/>
</dbReference>
<dbReference type="HPA" id="ENSG00000206538">
    <property type="expression patterns" value="Tissue enhanced (placenta)"/>
</dbReference>
<dbReference type="MIM" id="609980">
    <property type="type" value="gene"/>
</dbReference>
<dbReference type="neXtProt" id="NX_A8MV65"/>
<dbReference type="OpenTargets" id="ENSG00000206538"/>
<dbReference type="PharmGKB" id="PA142670628"/>
<dbReference type="VEuPathDB" id="HostDB:ENSG00000206538"/>
<dbReference type="eggNOG" id="ENOG502R6G3">
    <property type="taxonomic scope" value="Eukaryota"/>
</dbReference>
<dbReference type="GeneTree" id="ENSGT00530000063353"/>
<dbReference type="HOGENOM" id="CLU_056560_0_0_1"/>
<dbReference type="InParanoid" id="A8MV65"/>
<dbReference type="OMA" id="AKTSVWF"/>
<dbReference type="OrthoDB" id="10069705at2759"/>
<dbReference type="PAN-GO" id="A8MV65">
    <property type="GO annotations" value="2 GO annotations based on evolutionary models"/>
</dbReference>
<dbReference type="PhylomeDB" id="A8MV65"/>
<dbReference type="TreeFam" id="TF326340"/>
<dbReference type="PathwayCommons" id="A8MV65"/>
<dbReference type="SignaLink" id="A8MV65"/>
<dbReference type="BioGRID-ORCS" id="389136">
    <property type="hits" value="22 hits in 1152 CRISPR screens"/>
</dbReference>
<dbReference type="ChiTaRS" id="VGLL3">
    <property type="organism name" value="human"/>
</dbReference>
<dbReference type="GenomeRNAi" id="389136"/>
<dbReference type="Pharos" id="A8MV65">
    <property type="development level" value="Tbio"/>
</dbReference>
<dbReference type="PRO" id="PR:A8MV65"/>
<dbReference type="Proteomes" id="UP000005640">
    <property type="component" value="Chromosome 3"/>
</dbReference>
<dbReference type="RNAct" id="A8MV65">
    <property type="molecule type" value="protein"/>
</dbReference>
<dbReference type="Bgee" id="ENSG00000206538">
    <property type="expression patterns" value="Expressed in lower lobe of lung and 148 other cell types or tissues"/>
</dbReference>
<dbReference type="ExpressionAtlas" id="A8MV65">
    <property type="expression patterns" value="baseline and differential"/>
</dbReference>
<dbReference type="GO" id="GO:0005634">
    <property type="term" value="C:nucleus"/>
    <property type="evidence" value="ECO:0000318"/>
    <property type="project" value="GO_Central"/>
</dbReference>
<dbReference type="GO" id="GO:0006357">
    <property type="term" value="P:regulation of transcription by RNA polymerase II"/>
    <property type="evidence" value="ECO:0000318"/>
    <property type="project" value="GO_Central"/>
</dbReference>
<dbReference type="InterPro" id="IPR006627">
    <property type="entry name" value="TDU_repeat"/>
</dbReference>
<dbReference type="InterPro" id="IPR011520">
    <property type="entry name" value="Vg_fam"/>
</dbReference>
<dbReference type="PANTHER" id="PTHR15950">
    <property type="entry name" value="TRANSCRIPTION COFACTOR VESTIGIAL-LIKE PROTEIN"/>
    <property type="match status" value="1"/>
</dbReference>
<dbReference type="PANTHER" id="PTHR15950:SF16">
    <property type="entry name" value="TRANSCRIPTION COFACTOR VESTIGIAL-LIKE PROTEIN 3"/>
    <property type="match status" value="1"/>
</dbReference>
<dbReference type="Pfam" id="PF07545">
    <property type="entry name" value="Vg_Tdu"/>
    <property type="match status" value="1"/>
</dbReference>
<dbReference type="SMART" id="SM00711">
    <property type="entry name" value="TDU"/>
    <property type="match status" value="1"/>
</dbReference>
<reference key="1">
    <citation type="journal article" date="2006" name="Nature">
        <title>The DNA sequence, annotation and analysis of human chromosome 3.</title>
        <authorList>
            <person name="Muzny D.M."/>
            <person name="Scherer S.E."/>
            <person name="Kaul R."/>
            <person name="Wang J."/>
            <person name="Yu J."/>
            <person name="Sudbrak R."/>
            <person name="Buhay C.J."/>
            <person name="Chen R."/>
            <person name="Cree A."/>
            <person name="Ding Y."/>
            <person name="Dugan-Rocha S."/>
            <person name="Gill R."/>
            <person name="Gunaratne P."/>
            <person name="Harris R.A."/>
            <person name="Hawes A.C."/>
            <person name="Hernandez J."/>
            <person name="Hodgson A.V."/>
            <person name="Hume J."/>
            <person name="Jackson A."/>
            <person name="Khan Z.M."/>
            <person name="Kovar-Smith C."/>
            <person name="Lewis L.R."/>
            <person name="Lozado R.J."/>
            <person name="Metzker M.L."/>
            <person name="Milosavljevic A."/>
            <person name="Miner G.R."/>
            <person name="Morgan M.B."/>
            <person name="Nazareth L.V."/>
            <person name="Scott G."/>
            <person name="Sodergren E."/>
            <person name="Song X.-Z."/>
            <person name="Steffen D."/>
            <person name="Wei S."/>
            <person name="Wheeler D.A."/>
            <person name="Wright M.W."/>
            <person name="Worley K.C."/>
            <person name="Yuan Y."/>
            <person name="Zhang Z."/>
            <person name="Adams C.Q."/>
            <person name="Ansari-Lari M.A."/>
            <person name="Ayele M."/>
            <person name="Brown M.J."/>
            <person name="Chen G."/>
            <person name="Chen Z."/>
            <person name="Clendenning J."/>
            <person name="Clerc-Blankenburg K.P."/>
            <person name="Chen R."/>
            <person name="Chen Z."/>
            <person name="Davis C."/>
            <person name="Delgado O."/>
            <person name="Dinh H.H."/>
            <person name="Dong W."/>
            <person name="Draper H."/>
            <person name="Ernst S."/>
            <person name="Fu G."/>
            <person name="Gonzalez-Garay M.L."/>
            <person name="Garcia D.K."/>
            <person name="Gillett W."/>
            <person name="Gu J."/>
            <person name="Hao B."/>
            <person name="Haugen E."/>
            <person name="Havlak P."/>
            <person name="He X."/>
            <person name="Hennig S."/>
            <person name="Hu S."/>
            <person name="Huang W."/>
            <person name="Jackson L.R."/>
            <person name="Jacob L.S."/>
            <person name="Kelly S.H."/>
            <person name="Kube M."/>
            <person name="Levy R."/>
            <person name="Li Z."/>
            <person name="Liu B."/>
            <person name="Liu J."/>
            <person name="Liu W."/>
            <person name="Lu J."/>
            <person name="Maheshwari M."/>
            <person name="Nguyen B.-V."/>
            <person name="Okwuonu G.O."/>
            <person name="Palmeiri A."/>
            <person name="Pasternak S."/>
            <person name="Perez L.M."/>
            <person name="Phelps K.A."/>
            <person name="Plopper F.J."/>
            <person name="Qiang B."/>
            <person name="Raymond C."/>
            <person name="Rodriguez R."/>
            <person name="Saenphimmachak C."/>
            <person name="Santibanez J."/>
            <person name="Shen H."/>
            <person name="Shen Y."/>
            <person name="Subramanian S."/>
            <person name="Tabor P.E."/>
            <person name="Verduzco D."/>
            <person name="Waldron L."/>
            <person name="Wang J."/>
            <person name="Wang J."/>
            <person name="Wang Q."/>
            <person name="Williams G.A."/>
            <person name="Wong G.K.-S."/>
            <person name="Yao Z."/>
            <person name="Zhang J."/>
            <person name="Zhang X."/>
            <person name="Zhao G."/>
            <person name="Zhou J."/>
            <person name="Zhou Y."/>
            <person name="Nelson D."/>
            <person name="Lehrach H."/>
            <person name="Reinhardt R."/>
            <person name="Naylor S.L."/>
            <person name="Yang H."/>
            <person name="Olson M."/>
            <person name="Weinstock G."/>
            <person name="Gibbs R.A."/>
        </authorList>
    </citation>
    <scope>NUCLEOTIDE SEQUENCE [LARGE SCALE GENOMIC DNA]</scope>
</reference>
<reference evidence="9" key="2">
    <citation type="submission" date="2005-09" db="EMBL/GenBank/DDBJ databases">
        <authorList>
            <person name="Mural R.J."/>
            <person name="Istrail S."/>
            <person name="Sutton G.G."/>
            <person name="Florea L."/>
            <person name="Halpern A.L."/>
            <person name="Mobarry C.M."/>
            <person name="Lippert R."/>
            <person name="Walenz B."/>
            <person name="Shatkay H."/>
            <person name="Dew I."/>
            <person name="Miller J.R."/>
            <person name="Flanigan M.J."/>
            <person name="Edwards N.J."/>
            <person name="Bolanos R."/>
            <person name="Fasulo D."/>
            <person name="Halldorsson B.V."/>
            <person name="Hannenhalli S."/>
            <person name="Turner R."/>
            <person name="Yooseph S."/>
            <person name="Lu F."/>
            <person name="Nusskern D.R."/>
            <person name="Shue B.C."/>
            <person name="Zheng X.H."/>
            <person name="Zhong F."/>
            <person name="Delcher A.L."/>
            <person name="Huson D.H."/>
            <person name="Kravitz S.A."/>
            <person name="Mouchard L."/>
            <person name="Reinert K."/>
            <person name="Remington K.A."/>
            <person name="Clark A.G."/>
            <person name="Waterman M.S."/>
            <person name="Eichler E.E."/>
            <person name="Adams M.D."/>
            <person name="Hunkapiller M.W."/>
            <person name="Myers E.W."/>
            <person name="Venter J.C."/>
        </authorList>
    </citation>
    <scope>NUCLEOTIDE SEQUENCE [LARGE SCALE GENOMIC DNA]</scope>
</reference>
<reference evidence="8" key="3">
    <citation type="journal article" date="2004" name="Genome Res.">
        <title>The status, quality, and expansion of the NIH full-length cDNA project: the Mammalian Gene Collection (MGC).</title>
        <authorList>
            <consortium name="The MGC Project Team"/>
        </authorList>
    </citation>
    <scope>NUCLEOTIDE SEQUENCE [LARGE SCALE MRNA] (ISOFORM 2)</scope>
    <source>
        <tissue evidence="8">Placenta</tissue>
    </source>
</reference>
<reference evidence="7" key="4">
    <citation type="journal article" date="2002" name="J. Biol. Chem.">
        <title>Mammalian vestigial-like 2, a cofactor of TEF-1 and MEF2 transcription factors that promotes skeletal muscle differentiation.</title>
        <authorList>
            <person name="Maeda T."/>
            <person name="Chapman D.L."/>
            <person name="Stewart A.F.R."/>
        </authorList>
    </citation>
    <scope>IDENTIFICATION</scope>
    <scope>TISSUE SPECIFICITY</scope>
</reference>
<reference key="5">
    <citation type="journal article" date="2017" name="Nat. Struct. Mol. Biol.">
        <title>Site-specific mapping of the human SUMO proteome reveals co-modification with phosphorylation.</title>
        <authorList>
            <person name="Hendriks I.A."/>
            <person name="Lyon D."/>
            <person name="Young C."/>
            <person name="Jensen L.J."/>
            <person name="Vertegaal A.C."/>
            <person name="Nielsen M.L."/>
        </authorList>
    </citation>
    <scope>SUMOYLATION [LARGE SCALE ANALYSIS] AT LYS-62 AND LYS-126</scope>
    <scope>IDENTIFICATION BY MASS SPECTROMETRY [LARGE SCALE ANALYSIS]</scope>
</reference>
<evidence type="ECO:0000250" key="1">
    <source>
        <dbReference type="UniProtKB" id="Q8N8G2"/>
    </source>
</evidence>
<evidence type="ECO:0000255" key="2"/>
<evidence type="ECO:0000256" key="3">
    <source>
        <dbReference type="SAM" id="MobiDB-lite"/>
    </source>
</evidence>
<evidence type="ECO:0000269" key="4">
    <source>
    </source>
</evidence>
<evidence type="ECO:0000269" key="5">
    <source>
    </source>
</evidence>
<evidence type="ECO:0000303" key="6">
    <source>
    </source>
</evidence>
<evidence type="ECO:0000305" key="7"/>
<evidence type="ECO:0000312" key="8">
    <source>
        <dbReference type="EMBL" id="AAH94780.1"/>
    </source>
</evidence>
<evidence type="ECO:0000312" key="9">
    <source>
        <dbReference type="EMBL" id="EAW68870.1"/>
    </source>
</evidence>
<evidence type="ECO:0007744" key="10">
    <source>
    </source>
</evidence>
<keyword id="KW-0025">Alternative splicing</keyword>
<keyword id="KW-1017">Isopeptide bond</keyword>
<keyword id="KW-0539">Nucleus</keyword>
<keyword id="KW-1267">Proteomics identification</keyword>
<keyword id="KW-1185">Reference proteome</keyword>
<keyword id="KW-0804">Transcription</keyword>
<keyword id="KW-0805">Transcription regulation</keyword>
<keyword id="KW-0832">Ubl conjugation</keyword>
<organism>
    <name type="scientific">Homo sapiens</name>
    <name type="common">Human</name>
    <dbReference type="NCBI Taxonomy" id="9606"/>
    <lineage>
        <taxon>Eukaryota</taxon>
        <taxon>Metazoa</taxon>
        <taxon>Chordata</taxon>
        <taxon>Craniata</taxon>
        <taxon>Vertebrata</taxon>
        <taxon>Euteleostomi</taxon>
        <taxon>Mammalia</taxon>
        <taxon>Eutheria</taxon>
        <taxon>Euarchontoglires</taxon>
        <taxon>Primates</taxon>
        <taxon>Haplorrhini</taxon>
        <taxon>Catarrhini</taxon>
        <taxon>Hominidae</taxon>
        <taxon>Homo</taxon>
    </lineage>
</organism>
<accession>A8MV65</accession>
<accession>D3DU37</accession>
<accession>Q504T7</accession>
<proteinExistence type="evidence at protein level"/>
<name>VGLL3_HUMAN</name>
<protein>
    <recommendedName>
        <fullName>Transcription cofactor vestigial-like protein 3</fullName>
        <shortName>Vgl-3</shortName>
    </recommendedName>
</protein>
<feature type="chain" id="PRO_0000324661" description="Transcription cofactor vestigial-like protein 3">
    <location>
        <begin position="1"/>
        <end position="326"/>
    </location>
</feature>
<feature type="region of interest" description="Disordered" evidence="3">
    <location>
        <begin position="57"/>
        <end position="80"/>
    </location>
</feature>
<feature type="region of interest" description="Disordered" evidence="3">
    <location>
        <begin position="175"/>
        <end position="203"/>
    </location>
</feature>
<feature type="region of interest" description="Disordered" evidence="3">
    <location>
        <begin position="233"/>
        <end position="256"/>
    </location>
</feature>
<feature type="compositionally biased region" description="Acidic residues" evidence="3">
    <location>
        <begin position="64"/>
        <end position="75"/>
    </location>
</feature>
<feature type="compositionally biased region" description="Basic residues" evidence="3">
    <location>
        <begin position="233"/>
        <end position="249"/>
    </location>
</feature>
<feature type="cross-link" description="Glycyl lysine isopeptide (Lys-Gly) (interchain with G-Cter in SUMO2)" evidence="10">
    <location>
        <position position="62"/>
    </location>
</feature>
<feature type="cross-link" description="Glycyl lysine isopeptide (Lys-Gly) (interchain with G-Cter in SUMO2)" evidence="10">
    <location>
        <position position="126"/>
    </location>
</feature>
<feature type="splice variant" id="VSP_052713" description="In isoform 2." evidence="6">
    <original>LQHQDKSKESPWY</original>
    <variation>WSAMARS</variation>
    <location>
        <begin position="314"/>
        <end position="326"/>
    </location>
</feature>
<sequence>MSCAEVMYHPQPYGASQYLPNPMAATTCPTAYYQPAPQPGQQKKLAVFSKMQDSLEVTLPSKQEEEDEEEEEEEKDQPAEMEYLNSRCVLFTYFQGDIGSVVDEHFSRALGQAITLHPESAISKSKMGLTPLWRDSSALSSQRNSFPTSFWTSSYQPPPAPCLGGVHPDFQVTGPPGTFSAADPSPWPGHNLHQTGPAPPPAVSESWPYPLTSQVSPSYSHMHDVYMRHHHPHAHMHHRHRHHHHHHHPPAGSALDPSYGPLLMPSVHAARIPAPQCDITKTEPTTVTSATSAWAGAFHGTVDIVPSVGFDTGLQHQDKSKESPWY</sequence>
<gene>
    <name type="primary">VGLL3</name>
</gene>